<reference key="1">
    <citation type="journal article" date="1992" name="Science">
        <title>Cloning of a second type of activin receptor and functional characterization in Xenopus embryos.</title>
        <authorList>
            <person name="Mathews L.S."/>
            <person name="Vale W.W."/>
            <person name="Kintner C.R."/>
        </authorList>
    </citation>
    <scope>NUCLEOTIDE SEQUENCE [MRNA]</scope>
</reference>
<sequence>MGASVALTFLLLLATFRAGSGHDEVETRECIYYNANWELEKTNQSGVERLVEGKKDKRLHCYASWRNNSGFIELVKKGCWLDDFNCYDRQECIAKEENPQVFFCCCEGNYCNKKFTHLPEVETFDPKPQPSASVLNILIYSLLPIVGLSMAILLAFWMYRHRKPSYGHVEINEDPGLPPPSPLVGLKPLQLLDIKARGRFGCVWKARLLNEYVAVKIFPVQDKQSWQCEKEIFTTPGMKHENLLEFIAAEKRGSNLEMELWLITAFHDKGSLTDYLKGNLVSWNELCHITETMARGLAYLHEDVPRCKGEGHKPAIAHRDFKSKNVLLRNDLTAILADFGLAVRFEPGKPPGDTHGQVGTRRYMAPEVLEGAINFQRDSFLRIDMYAMGLVLWEIVSRCTAADGPVDEYLLPFEEEIGQHPSLEDLQEVVVHKKIRPVFKDHWLKHPGLAQLCVTIEECWDHDAEARLSAGCVEERISQIRKSVNGTTSDCLVSIVTSVTNVDLPPKESSI</sequence>
<accession>P27041</accession>
<proteinExistence type="evidence at transcript level"/>
<dbReference type="EC" id="2.7.11.30"/>
<dbReference type="EMBL" id="M88594">
    <property type="protein sequence ID" value="AAB00480.1"/>
    <property type="molecule type" value="mRNA"/>
</dbReference>
<dbReference type="RefSeq" id="NP_001084049.1">
    <property type="nucleotide sequence ID" value="NM_001090580.1"/>
</dbReference>
<dbReference type="SMR" id="P27041"/>
<dbReference type="GlyCosmos" id="P27041">
    <property type="glycosylation" value="2 sites, No reported glycans"/>
</dbReference>
<dbReference type="GeneID" id="399277"/>
<dbReference type="KEGG" id="xla:399277"/>
<dbReference type="AGR" id="Xenbase:XB-GENE-484252"/>
<dbReference type="CTD" id="399277"/>
<dbReference type="Xenbase" id="XB-GENE-484252">
    <property type="gene designation" value="acvr2b.L"/>
</dbReference>
<dbReference type="OrthoDB" id="547665at2759"/>
<dbReference type="BRENDA" id="2.7.10.2">
    <property type="organism ID" value="6725"/>
</dbReference>
<dbReference type="Proteomes" id="UP000186698">
    <property type="component" value="Chromosome 6L"/>
</dbReference>
<dbReference type="Bgee" id="399277">
    <property type="expression patterns" value="Expressed in blastula and 12 other cell types or tissues"/>
</dbReference>
<dbReference type="GO" id="GO:0048179">
    <property type="term" value="C:activin receptor complex"/>
    <property type="evidence" value="ECO:0000318"/>
    <property type="project" value="GO_Central"/>
</dbReference>
<dbReference type="GO" id="GO:0005886">
    <property type="term" value="C:plasma membrane"/>
    <property type="evidence" value="ECO:0000318"/>
    <property type="project" value="GO_Central"/>
</dbReference>
<dbReference type="GO" id="GO:0048185">
    <property type="term" value="F:activin binding"/>
    <property type="evidence" value="ECO:0000318"/>
    <property type="project" value="GO_Central"/>
</dbReference>
<dbReference type="GO" id="GO:0017002">
    <property type="term" value="F:activin receptor activity"/>
    <property type="evidence" value="ECO:0000318"/>
    <property type="project" value="GO_Central"/>
</dbReference>
<dbReference type="GO" id="GO:0005524">
    <property type="term" value="F:ATP binding"/>
    <property type="evidence" value="ECO:0007669"/>
    <property type="project" value="UniProtKB-KW"/>
</dbReference>
<dbReference type="GO" id="GO:0032924">
    <property type="term" value="P:activin receptor signaling pathway"/>
    <property type="evidence" value="ECO:0000318"/>
    <property type="project" value="GO_Central"/>
</dbReference>
<dbReference type="GO" id="GO:0071363">
    <property type="term" value="P:cellular response to growth factor stimulus"/>
    <property type="evidence" value="ECO:0000318"/>
    <property type="project" value="GO_Central"/>
</dbReference>
<dbReference type="GO" id="GO:0007389">
    <property type="term" value="P:pattern specification process"/>
    <property type="evidence" value="ECO:0000318"/>
    <property type="project" value="GO_Central"/>
</dbReference>
<dbReference type="CDD" id="cd14140">
    <property type="entry name" value="STKc_ACVR2b"/>
    <property type="match status" value="1"/>
</dbReference>
<dbReference type="CDD" id="cd23632">
    <property type="entry name" value="TFP_LU_ECD_ACVR2B"/>
    <property type="match status" value="1"/>
</dbReference>
<dbReference type="FunFam" id="1.10.510.10:FF:000099">
    <property type="entry name" value="Serine/threonine-protein kinase receptor"/>
    <property type="match status" value="1"/>
</dbReference>
<dbReference type="FunFam" id="2.10.60.10:FF:000002">
    <property type="entry name" value="Serine/threonine-protein kinase receptor"/>
    <property type="match status" value="1"/>
</dbReference>
<dbReference type="FunFam" id="3.30.200.20:FF:000094">
    <property type="entry name" value="Serine/threonine-protein kinase receptor"/>
    <property type="match status" value="1"/>
</dbReference>
<dbReference type="Gene3D" id="2.10.60.10">
    <property type="entry name" value="CD59"/>
    <property type="match status" value="1"/>
</dbReference>
<dbReference type="Gene3D" id="3.30.200.20">
    <property type="entry name" value="Phosphorylase Kinase, domain 1"/>
    <property type="match status" value="1"/>
</dbReference>
<dbReference type="Gene3D" id="1.10.510.10">
    <property type="entry name" value="Transferase(Phosphotransferase) domain 1"/>
    <property type="match status" value="1"/>
</dbReference>
<dbReference type="InterPro" id="IPR000472">
    <property type="entry name" value="Activin_recp"/>
</dbReference>
<dbReference type="InterPro" id="IPR011009">
    <property type="entry name" value="Kinase-like_dom_sf"/>
</dbReference>
<dbReference type="InterPro" id="IPR000719">
    <property type="entry name" value="Prot_kinase_dom"/>
</dbReference>
<dbReference type="InterPro" id="IPR008271">
    <property type="entry name" value="Ser/Thr_kinase_AS"/>
</dbReference>
<dbReference type="InterPro" id="IPR045860">
    <property type="entry name" value="Snake_toxin-like_sf"/>
</dbReference>
<dbReference type="InterPro" id="IPR000333">
    <property type="entry name" value="TGFB_receptor"/>
</dbReference>
<dbReference type="PANTHER" id="PTHR23255:SF70">
    <property type="entry name" value="ACTIVIN RECEPTOR TYPE-2B"/>
    <property type="match status" value="1"/>
</dbReference>
<dbReference type="PANTHER" id="PTHR23255">
    <property type="entry name" value="TRANSFORMING GROWTH FACTOR-BETA RECEPTOR TYPE I AND II"/>
    <property type="match status" value="1"/>
</dbReference>
<dbReference type="Pfam" id="PF01064">
    <property type="entry name" value="Activin_recp"/>
    <property type="match status" value="1"/>
</dbReference>
<dbReference type="Pfam" id="PF00069">
    <property type="entry name" value="Pkinase"/>
    <property type="match status" value="1"/>
</dbReference>
<dbReference type="PRINTS" id="PR00653">
    <property type="entry name" value="ACTIVIN2R"/>
</dbReference>
<dbReference type="SUPFAM" id="SSF56112">
    <property type="entry name" value="Protein kinase-like (PK-like)"/>
    <property type="match status" value="1"/>
</dbReference>
<dbReference type="SUPFAM" id="SSF57302">
    <property type="entry name" value="Snake toxin-like"/>
    <property type="match status" value="1"/>
</dbReference>
<dbReference type="PROSITE" id="PS50011">
    <property type="entry name" value="PROTEIN_KINASE_DOM"/>
    <property type="match status" value="1"/>
</dbReference>
<dbReference type="PROSITE" id="PS00108">
    <property type="entry name" value="PROTEIN_KINASE_ST"/>
    <property type="match status" value="1"/>
</dbReference>
<protein>
    <recommendedName>
        <fullName>Activin receptor type-2B</fullName>
        <ecNumber>2.7.11.30</ecNumber>
    </recommendedName>
    <alternativeName>
        <fullName>Activin receptor type IIB</fullName>
        <shortName>ACTR-IIB</shortName>
    </alternativeName>
</protein>
<keyword id="KW-0067">ATP-binding</keyword>
<keyword id="KW-1015">Disulfide bond</keyword>
<keyword id="KW-0325">Glycoprotein</keyword>
<keyword id="KW-0418">Kinase</keyword>
<keyword id="KW-0472">Membrane</keyword>
<keyword id="KW-0547">Nucleotide-binding</keyword>
<keyword id="KW-0675">Receptor</keyword>
<keyword id="KW-1185">Reference proteome</keyword>
<keyword id="KW-0723">Serine/threonine-protein kinase</keyword>
<keyword id="KW-0732">Signal</keyword>
<keyword id="KW-0808">Transferase</keyword>
<keyword id="KW-0812">Transmembrane</keyword>
<keyword id="KW-1133">Transmembrane helix</keyword>
<comment type="function">
    <text>Receptor for activin A, activin B and inhibin A. Involved in transmembrane signaling.</text>
</comment>
<comment type="catalytic activity">
    <reaction>
        <text>L-threonyl-[receptor-protein] + ATP = O-phospho-L-threonyl-[receptor-protein] + ADP + H(+)</text>
        <dbReference type="Rhea" id="RHEA:44880"/>
        <dbReference type="Rhea" id="RHEA-COMP:11024"/>
        <dbReference type="Rhea" id="RHEA-COMP:11025"/>
        <dbReference type="ChEBI" id="CHEBI:15378"/>
        <dbReference type="ChEBI" id="CHEBI:30013"/>
        <dbReference type="ChEBI" id="CHEBI:30616"/>
        <dbReference type="ChEBI" id="CHEBI:61977"/>
        <dbReference type="ChEBI" id="CHEBI:456216"/>
        <dbReference type="EC" id="2.7.11.30"/>
    </reaction>
</comment>
<comment type="catalytic activity">
    <reaction>
        <text>L-seryl-[receptor-protein] + ATP = O-phospho-L-seryl-[receptor-protein] + ADP + H(+)</text>
        <dbReference type="Rhea" id="RHEA:18673"/>
        <dbReference type="Rhea" id="RHEA-COMP:11022"/>
        <dbReference type="Rhea" id="RHEA-COMP:11023"/>
        <dbReference type="ChEBI" id="CHEBI:15378"/>
        <dbReference type="ChEBI" id="CHEBI:29999"/>
        <dbReference type="ChEBI" id="CHEBI:30616"/>
        <dbReference type="ChEBI" id="CHEBI:83421"/>
        <dbReference type="ChEBI" id="CHEBI:456216"/>
        <dbReference type="EC" id="2.7.11.30"/>
    </reaction>
</comment>
<comment type="subcellular location">
    <subcellularLocation>
        <location>Membrane</location>
        <topology>Single-pass type I membrane protein</topology>
    </subcellularLocation>
</comment>
<comment type="similarity">
    <text evidence="5">Belongs to the protein kinase superfamily. TKL Ser/Thr protein kinase family. TGFB receptor subfamily.</text>
</comment>
<feature type="signal peptide" evidence="2">
    <location>
        <begin position="1"/>
        <end position="20"/>
    </location>
</feature>
<feature type="chain" id="PRO_0000024407" description="Activin receptor type-2B">
    <location>
        <begin position="21"/>
        <end position="511"/>
    </location>
</feature>
<feature type="topological domain" description="Extracellular" evidence="2">
    <location>
        <begin position="21"/>
        <end position="136"/>
    </location>
</feature>
<feature type="transmembrane region" description="Helical" evidence="2">
    <location>
        <begin position="137"/>
        <end position="157"/>
    </location>
</feature>
<feature type="topological domain" description="Cytoplasmic" evidence="2">
    <location>
        <begin position="158"/>
        <end position="511"/>
    </location>
</feature>
<feature type="domain" description="Protein kinase" evidence="3">
    <location>
        <begin position="189"/>
        <end position="477"/>
    </location>
</feature>
<feature type="active site" description="Proton acceptor" evidence="3 4">
    <location>
        <position position="320"/>
    </location>
</feature>
<feature type="binding site" evidence="3">
    <location>
        <begin position="195"/>
        <end position="203"/>
    </location>
    <ligand>
        <name>ATP</name>
        <dbReference type="ChEBI" id="CHEBI:30616"/>
    </ligand>
</feature>
<feature type="binding site" evidence="3">
    <location>
        <position position="216"/>
    </location>
    <ligand>
        <name>ATP</name>
        <dbReference type="ChEBI" id="CHEBI:30616"/>
    </ligand>
</feature>
<feature type="glycosylation site" description="N-linked (GlcNAc...) asparagine" evidence="2">
    <location>
        <position position="43"/>
    </location>
</feature>
<feature type="glycosylation site" description="N-linked (GlcNAc...) asparagine" evidence="2">
    <location>
        <position position="67"/>
    </location>
</feature>
<feature type="disulfide bond" evidence="1">
    <location>
        <begin position="30"/>
        <end position="61"/>
    </location>
</feature>
<feature type="disulfide bond" evidence="1">
    <location>
        <begin position="86"/>
        <end position="105"/>
    </location>
</feature>
<feature type="disulfide bond" evidence="1">
    <location>
        <begin position="92"/>
        <end position="104"/>
    </location>
</feature>
<feature type="disulfide bond" evidence="1">
    <location>
        <begin position="106"/>
        <end position="111"/>
    </location>
</feature>
<name>AVR2B_XENLA</name>
<organism>
    <name type="scientific">Xenopus laevis</name>
    <name type="common">African clawed frog</name>
    <dbReference type="NCBI Taxonomy" id="8355"/>
    <lineage>
        <taxon>Eukaryota</taxon>
        <taxon>Metazoa</taxon>
        <taxon>Chordata</taxon>
        <taxon>Craniata</taxon>
        <taxon>Vertebrata</taxon>
        <taxon>Euteleostomi</taxon>
        <taxon>Amphibia</taxon>
        <taxon>Batrachia</taxon>
        <taxon>Anura</taxon>
        <taxon>Pipoidea</taxon>
        <taxon>Pipidae</taxon>
        <taxon>Xenopodinae</taxon>
        <taxon>Xenopus</taxon>
        <taxon>Xenopus</taxon>
    </lineage>
</organism>
<gene>
    <name type="primary">acvr2b</name>
</gene>
<evidence type="ECO:0000250" key="1">
    <source>
        <dbReference type="UniProtKB" id="P38445"/>
    </source>
</evidence>
<evidence type="ECO:0000255" key="2"/>
<evidence type="ECO:0000255" key="3">
    <source>
        <dbReference type="PROSITE-ProRule" id="PRU00159"/>
    </source>
</evidence>
<evidence type="ECO:0000255" key="4">
    <source>
        <dbReference type="PROSITE-ProRule" id="PRU10027"/>
    </source>
</evidence>
<evidence type="ECO:0000305" key="5"/>